<sequence>MSNVDINHARALVYQLLSSLFAREIDEQRLKQLTSEQAQQFWTQLGYAPEFSAPVASIQKVLNDLTSDEALLELAADYCGLFLVGTKYSASPYASLYLSPEEEPLLFGQQHQQMSEFLHQSKLQVQSHFPEPADHLAVILAYMGHLACHSEDAAQLSFLNTCIDSWLAKFVAKVIECDSQHSNGFYSALATLTLAWVQQDKQQLEQAIH</sequence>
<evidence type="ECO:0000255" key="1">
    <source>
        <dbReference type="HAMAP-Rule" id="MF_01150"/>
    </source>
</evidence>
<reference key="1">
    <citation type="submission" date="2006-08" db="EMBL/GenBank/DDBJ databases">
        <title>Complete sequence of Shewanella sp. MR-4.</title>
        <authorList>
            <consortium name="US DOE Joint Genome Institute"/>
            <person name="Copeland A."/>
            <person name="Lucas S."/>
            <person name="Lapidus A."/>
            <person name="Barry K."/>
            <person name="Detter J.C."/>
            <person name="Glavina del Rio T."/>
            <person name="Hammon N."/>
            <person name="Israni S."/>
            <person name="Dalin E."/>
            <person name="Tice H."/>
            <person name="Pitluck S."/>
            <person name="Kiss H."/>
            <person name="Brettin T."/>
            <person name="Bruce D."/>
            <person name="Han C."/>
            <person name="Tapia R."/>
            <person name="Gilna P."/>
            <person name="Schmutz J."/>
            <person name="Larimer F."/>
            <person name="Land M."/>
            <person name="Hauser L."/>
            <person name="Kyrpides N."/>
            <person name="Mikhailova N."/>
            <person name="Nealson K."/>
            <person name="Konstantinidis K."/>
            <person name="Klappenbach J."/>
            <person name="Tiedje J."/>
            <person name="Richardson P."/>
        </authorList>
    </citation>
    <scope>NUCLEOTIDE SEQUENCE [LARGE SCALE GENOMIC DNA]</scope>
    <source>
        <strain>MR-4</strain>
    </source>
</reference>
<name>TORD_SHESM</name>
<dbReference type="EMBL" id="CP000446">
    <property type="protein sequence ID" value="ABI38130.1"/>
    <property type="molecule type" value="Genomic_DNA"/>
</dbReference>
<dbReference type="RefSeq" id="WP_011621841.1">
    <property type="nucleotide sequence ID" value="NC_008321.1"/>
</dbReference>
<dbReference type="SMR" id="Q0HLD7"/>
<dbReference type="KEGG" id="she:Shewmr4_1050"/>
<dbReference type="HOGENOM" id="CLU_077650_4_0_6"/>
<dbReference type="GO" id="GO:0005737">
    <property type="term" value="C:cytoplasm"/>
    <property type="evidence" value="ECO:0007669"/>
    <property type="project" value="UniProtKB-SubCell"/>
</dbReference>
<dbReference type="GO" id="GO:0051259">
    <property type="term" value="P:protein complex oligomerization"/>
    <property type="evidence" value="ECO:0007669"/>
    <property type="project" value="InterPro"/>
</dbReference>
<dbReference type="GO" id="GO:0006457">
    <property type="term" value="P:protein folding"/>
    <property type="evidence" value="ECO:0007669"/>
    <property type="project" value="UniProtKB-UniRule"/>
</dbReference>
<dbReference type="Gene3D" id="1.20.120.1820">
    <property type="match status" value="1"/>
</dbReference>
<dbReference type="Gene3D" id="1.20.1280.20">
    <property type="entry name" value="HscB, C-terminal domain"/>
    <property type="match status" value="1"/>
</dbReference>
<dbReference type="HAMAP" id="MF_01150">
    <property type="entry name" value="TorD"/>
    <property type="match status" value="1"/>
</dbReference>
<dbReference type="InterPro" id="IPR023069">
    <property type="entry name" value="Chaperone_TorD"/>
</dbReference>
<dbReference type="InterPro" id="IPR020945">
    <property type="entry name" value="DMSO/NO3_reduct_chaperone"/>
</dbReference>
<dbReference type="InterPro" id="IPR036386">
    <property type="entry name" value="HscB_C_sf"/>
</dbReference>
<dbReference type="InterPro" id="IPR036411">
    <property type="entry name" value="TorD-like_sf"/>
</dbReference>
<dbReference type="InterPro" id="IPR050289">
    <property type="entry name" value="TorD/DmsD_chaperones"/>
</dbReference>
<dbReference type="NCBIfam" id="NF003442">
    <property type="entry name" value="PRK04976.1"/>
    <property type="match status" value="1"/>
</dbReference>
<dbReference type="PANTHER" id="PTHR34227:SF11">
    <property type="entry name" value="CHAPERONE PROTEIN TORD"/>
    <property type="match status" value="1"/>
</dbReference>
<dbReference type="PANTHER" id="PTHR34227">
    <property type="entry name" value="CHAPERONE PROTEIN YCDY"/>
    <property type="match status" value="1"/>
</dbReference>
<dbReference type="Pfam" id="PF02613">
    <property type="entry name" value="Nitrate_red_del"/>
    <property type="match status" value="1"/>
</dbReference>
<dbReference type="SUPFAM" id="SSF89155">
    <property type="entry name" value="TorD-like"/>
    <property type="match status" value="1"/>
</dbReference>
<gene>
    <name evidence="1" type="primary">torD</name>
    <name type="ordered locus">Shewmr4_1050</name>
</gene>
<proteinExistence type="inferred from homology"/>
<protein>
    <recommendedName>
        <fullName evidence="1">Chaperone protein TorD</fullName>
    </recommendedName>
</protein>
<feature type="chain" id="PRO_1000065507" description="Chaperone protein TorD">
    <location>
        <begin position="1"/>
        <end position="209"/>
    </location>
</feature>
<keyword id="KW-0143">Chaperone</keyword>
<keyword id="KW-0963">Cytoplasm</keyword>
<accession>Q0HLD7</accession>
<organism>
    <name type="scientific">Shewanella sp. (strain MR-4)</name>
    <dbReference type="NCBI Taxonomy" id="60480"/>
    <lineage>
        <taxon>Bacteria</taxon>
        <taxon>Pseudomonadati</taxon>
        <taxon>Pseudomonadota</taxon>
        <taxon>Gammaproteobacteria</taxon>
        <taxon>Alteromonadales</taxon>
        <taxon>Shewanellaceae</taxon>
        <taxon>Shewanella</taxon>
    </lineage>
</organism>
<comment type="function">
    <text evidence="1">Involved in the biogenesis of TorA. Acts on TorA before the insertion of the molybdenum cofactor and, as a result, probably favors a conformation of the apoenzyme that is competent for acquiring the cofactor.</text>
</comment>
<comment type="subcellular location">
    <subcellularLocation>
        <location evidence="1">Cytoplasm</location>
    </subcellularLocation>
</comment>
<comment type="similarity">
    <text evidence="1">Belongs to the TorD/DmsD family. TorD subfamily.</text>
</comment>